<accession>B3PPU4</accession>
<evidence type="ECO:0000255" key="1">
    <source>
        <dbReference type="HAMAP-Rule" id="MF_00268"/>
    </source>
</evidence>
<proteinExistence type="inferred from homology"/>
<sequence length="362" mass="38856">MSQNSLRLVEDKSVDKSKALEAALSQIERSFGKGSIMKLGSNENVIEIETISTGSLGLDIALGVGGLPKGRIIEIYGPESSGKTTLALQTIAESQKKGGICAFVDAEHALDPVYARKLGVDLQNLLISQPDTGEQALEITDTLVRSGAVDVLVVDSVAALTPRAEIEGEMGDSLPGLQARLMSQALRKLTASISKSNTMVIFINQIRMKIGVMFGSPETTTGGNALKFYASVRLDIRRIGSVKEREEVIGNQTRVKVVKNKMAPPFKQVEFDIMYGEGVSKTGELVDLGVKAGIVEKSGAWFSYNSQRLGQGRENAKTFLRDNPDLAREIELALRQNAGLIADRFLQNGGPDADDGDAAADM</sequence>
<name>RECA_RHIE6</name>
<protein>
    <recommendedName>
        <fullName evidence="1">Protein RecA</fullName>
    </recommendedName>
    <alternativeName>
        <fullName evidence="1">Recombinase A</fullName>
    </alternativeName>
</protein>
<gene>
    <name evidence="1" type="primary">recA</name>
    <name type="ordered locus">RHECIAT_CH0002420</name>
</gene>
<dbReference type="EMBL" id="CP001074">
    <property type="protein sequence ID" value="ACE91373.1"/>
    <property type="molecule type" value="Genomic_DNA"/>
</dbReference>
<dbReference type="SMR" id="B3PPU4"/>
<dbReference type="KEGG" id="rec:RHECIAT_CH0002420"/>
<dbReference type="eggNOG" id="COG0468">
    <property type="taxonomic scope" value="Bacteria"/>
</dbReference>
<dbReference type="HOGENOM" id="CLU_040469_1_2_5"/>
<dbReference type="Proteomes" id="UP000008817">
    <property type="component" value="Chromosome"/>
</dbReference>
<dbReference type="GO" id="GO:0005829">
    <property type="term" value="C:cytosol"/>
    <property type="evidence" value="ECO:0007669"/>
    <property type="project" value="TreeGrafter"/>
</dbReference>
<dbReference type="GO" id="GO:0005524">
    <property type="term" value="F:ATP binding"/>
    <property type="evidence" value="ECO:0007669"/>
    <property type="project" value="UniProtKB-UniRule"/>
</dbReference>
<dbReference type="GO" id="GO:0016887">
    <property type="term" value="F:ATP hydrolysis activity"/>
    <property type="evidence" value="ECO:0007669"/>
    <property type="project" value="InterPro"/>
</dbReference>
<dbReference type="GO" id="GO:0140664">
    <property type="term" value="F:ATP-dependent DNA damage sensor activity"/>
    <property type="evidence" value="ECO:0007669"/>
    <property type="project" value="InterPro"/>
</dbReference>
<dbReference type="GO" id="GO:0003684">
    <property type="term" value="F:damaged DNA binding"/>
    <property type="evidence" value="ECO:0007669"/>
    <property type="project" value="UniProtKB-UniRule"/>
</dbReference>
<dbReference type="GO" id="GO:0003697">
    <property type="term" value="F:single-stranded DNA binding"/>
    <property type="evidence" value="ECO:0007669"/>
    <property type="project" value="UniProtKB-UniRule"/>
</dbReference>
<dbReference type="GO" id="GO:0006310">
    <property type="term" value="P:DNA recombination"/>
    <property type="evidence" value="ECO:0007669"/>
    <property type="project" value="UniProtKB-UniRule"/>
</dbReference>
<dbReference type="GO" id="GO:0006281">
    <property type="term" value="P:DNA repair"/>
    <property type="evidence" value="ECO:0007669"/>
    <property type="project" value="UniProtKB-UniRule"/>
</dbReference>
<dbReference type="GO" id="GO:0009432">
    <property type="term" value="P:SOS response"/>
    <property type="evidence" value="ECO:0007669"/>
    <property type="project" value="UniProtKB-UniRule"/>
</dbReference>
<dbReference type="CDD" id="cd00983">
    <property type="entry name" value="RecA"/>
    <property type="match status" value="1"/>
</dbReference>
<dbReference type="FunFam" id="3.40.50.300:FF:000087">
    <property type="entry name" value="Recombinase RecA"/>
    <property type="match status" value="1"/>
</dbReference>
<dbReference type="Gene3D" id="3.40.50.300">
    <property type="entry name" value="P-loop containing nucleotide triphosphate hydrolases"/>
    <property type="match status" value="1"/>
</dbReference>
<dbReference type="HAMAP" id="MF_00268">
    <property type="entry name" value="RecA"/>
    <property type="match status" value="1"/>
</dbReference>
<dbReference type="InterPro" id="IPR003593">
    <property type="entry name" value="AAA+_ATPase"/>
</dbReference>
<dbReference type="InterPro" id="IPR013765">
    <property type="entry name" value="DNA_recomb/repair_RecA"/>
</dbReference>
<dbReference type="InterPro" id="IPR020584">
    <property type="entry name" value="DNA_recomb/repair_RecA_CS"/>
</dbReference>
<dbReference type="InterPro" id="IPR027417">
    <property type="entry name" value="P-loop_NTPase"/>
</dbReference>
<dbReference type="InterPro" id="IPR049261">
    <property type="entry name" value="RecA-like_C"/>
</dbReference>
<dbReference type="InterPro" id="IPR049428">
    <property type="entry name" value="RecA-like_N"/>
</dbReference>
<dbReference type="InterPro" id="IPR020588">
    <property type="entry name" value="RecA_ATP-bd"/>
</dbReference>
<dbReference type="InterPro" id="IPR023400">
    <property type="entry name" value="RecA_C_sf"/>
</dbReference>
<dbReference type="InterPro" id="IPR020587">
    <property type="entry name" value="RecA_monomer-monomer_interface"/>
</dbReference>
<dbReference type="NCBIfam" id="TIGR02012">
    <property type="entry name" value="tigrfam_recA"/>
    <property type="match status" value="1"/>
</dbReference>
<dbReference type="PANTHER" id="PTHR45900:SF1">
    <property type="entry name" value="MITOCHONDRIAL DNA REPAIR PROTEIN RECA HOMOLOG-RELATED"/>
    <property type="match status" value="1"/>
</dbReference>
<dbReference type="PANTHER" id="PTHR45900">
    <property type="entry name" value="RECA"/>
    <property type="match status" value="1"/>
</dbReference>
<dbReference type="Pfam" id="PF00154">
    <property type="entry name" value="RecA"/>
    <property type="match status" value="1"/>
</dbReference>
<dbReference type="Pfam" id="PF21096">
    <property type="entry name" value="RecA_C"/>
    <property type="match status" value="1"/>
</dbReference>
<dbReference type="PRINTS" id="PR00142">
    <property type="entry name" value="RECA"/>
</dbReference>
<dbReference type="SMART" id="SM00382">
    <property type="entry name" value="AAA"/>
    <property type="match status" value="1"/>
</dbReference>
<dbReference type="SUPFAM" id="SSF52540">
    <property type="entry name" value="P-loop containing nucleoside triphosphate hydrolases"/>
    <property type="match status" value="1"/>
</dbReference>
<dbReference type="SUPFAM" id="SSF54752">
    <property type="entry name" value="RecA protein, C-terminal domain"/>
    <property type="match status" value="1"/>
</dbReference>
<dbReference type="PROSITE" id="PS00321">
    <property type="entry name" value="RECA_1"/>
    <property type="match status" value="1"/>
</dbReference>
<dbReference type="PROSITE" id="PS50162">
    <property type="entry name" value="RECA_2"/>
    <property type="match status" value="1"/>
</dbReference>
<dbReference type="PROSITE" id="PS50163">
    <property type="entry name" value="RECA_3"/>
    <property type="match status" value="1"/>
</dbReference>
<organism>
    <name type="scientific">Rhizobium etli (strain CIAT 652)</name>
    <dbReference type="NCBI Taxonomy" id="491916"/>
    <lineage>
        <taxon>Bacteria</taxon>
        <taxon>Pseudomonadati</taxon>
        <taxon>Pseudomonadota</taxon>
        <taxon>Alphaproteobacteria</taxon>
        <taxon>Hyphomicrobiales</taxon>
        <taxon>Rhizobiaceae</taxon>
        <taxon>Rhizobium/Agrobacterium group</taxon>
        <taxon>Rhizobium</taxon>
    </lineage>
</organism>
<feature type="chain" id="PRO_1000114357" description="Protein RecA">
    <location>
        <begin position="1"/>
        <end position="362"/>
    </location>
</feature>
<feature type="binding site" evidence="1">
    <location>
        <begin position="77"/>
        <end position="84"/>
    </location>
    <ligand>
        <name>ATP</name>
        <dbReference type="ChEBI" id="CHEBI:30616"/>
    </ligand>
</feature>
<reference key="1">
    <citation type="journal article" date="2010" name="Appl. Environ. Microbiol.">
        <title>Conserved symbiotic plasmid DNA sequences in the multireplicon pangenomic structure of Rhizobium etli.</title>
        <authorList>
            <person name="Gonzalez V."/>
            <person name="Acosta J.L."/>
            <person name="Santamaria R.I."/>
            <person name="Bustos P."/>
            <person name="Fernandez J.L."/>
            <person name="Hernandez Gonzalez I.L."/>
            <person name="Diaz R."/>
            <person name="Flores M."/>
            <person name="Palacios R."/>
            <person name="Mora J."/>
            <person name="Davila G."/>
        </authorList>
    </citation>
    <scope>NUCLEOTIDE SEQUENCE [LARGE SCALE GENOMIC DNA]</scope>
    <source>
        <strain>CIAT 652</strain>
    </source>
</reference>
<keyword id="KW-0067">ATP-binding</keyword>
<keyword id="KW-0963">Cytoplasm</keyword>
<keyword id="KW-0227">DNA damage</keyword>
<keyword id="KW-0233">DNA recombination</keyword>
<keyword id="KW-0234">DNA repair</keyword>
<keyword id="KW-0238">DNA-binding</keyword>
<keyword id="KW-0547">Nucleotide-binding</keyword>
<keyword id="KW-0742">SOS response</keyword>
<comment type="function">
    <text evidence="1">Can catalyze the hydrolysis of ATP in the presence of single-stranded DNA, the ATP-dependent uptake of single-stranded DNA by duplex DNA, and the ATP-dependent hybridization of homologous single-stranded DNAs. It interacts with LexA causing its activation and leading to its autocatalytic cleavage.</text>
</comment>
<comment type="subcellular location">
    <subcellularLocation>
        <location evidence="1">Cytoplasm</location>
    </subcellularLocation>
</comment>
<comment type="similarity">
    <text evidence="1">Belongs to the RecA family.</text>
</comment>